<dbReference type="EMBL" id="AF426392">
    <property type="protein sequence ID" value="AAL65139.1"/>
    <property type="molecule type" value="mRNA"/>
</dbReference>
<dbReference type="RefSeq" id="NP_777248.1">
    <property type="nucleotide sequence ID" value="NM_174823.2"/>
</dbReference>
<dbReference type="SMR" id="Q8WN91"/>
<dbReference type="FunCoup" id="Q8WN91">
    <property type="interactions" value="133"/>
</dbReference>
<dbReference type="STRING" id="9913.ENSBTAP00000001628"/>
<dbReference type="GlyCosmos" id="Q8WN91">
    <property type="glycosylation" value="4 sites, No reported glycans"/>
</dbReference>
<dbReference type="GlyGen" id="Q8WN91">
    <property type="glycosylation" value="4 sites"/>
</dbReference>
<dbReference type="PaxDb" id="9913-ENSBTAP00000001628"/>
<dbReference type="GeneID" id="281996"/>
<dbReference type="KEGG" id="bta:281996"/>
<dbReference type="CTD" id="92211"/>
<dbReference type="eggNOG" id="KOG3594">
    <property type="taxonomic scope" value="Eukaryota"/>
</dbReference>
<dbReference type="InParanoid" id="Q8WN91"/>
<dbReference type="OrthoDB" id="6510378at2759"/>
<dbReference type="Proteomes" id="UP000009136">
    <property type="component" value="Unplaced"/>
</dbReference>
<dbReference type="GO" id="GO:0005912">
    <property type="term" value="C:adherens junction"/>
    <property type="evidence" value="ECO:0000318"/>
    <property type="project" value="GO_Central"/>
</dbReference>
<dbReference type="GO" id="GO:0016342">
    <property type="term" value="C:catenin complex"/>
    <property type="evidence" value="ECO:0000318"/>
    <property type="project" value="GO_Central"/>
</dbReference>
<dbReference type="GO" id="GO:0008013">
    <property type="term" value="F:beta-catenin binding"/>
    <property type="evidence" value="ECO:0000318"/>
    <property type="project" value="GO_Central"/>
</dbReference>
<dbReference type="GO" id="GO:0045296">
    <property type="term" value="F:cadherin binding"/>
    <property type="evidence" value="ECO:0000318"/>
    <property type="project" value="GO_Central"/>
</dbReference>
<dbReference type="GO" id="GO:0005509">
    <property type="term" value="F:calcium ion binding"/>
    <property type="evidence" value="ECO:0007669"/>
    <property type="project" value="InterPro"/>
</dbReference>
<dbReference type="GO" id="GO:0034332">
    <property type="term" value="P:adherens junction organization"/>
    <property type="evidence" value="ECO:0000318"/>
    <property type="project" value="GO_Central"/>
</dbReference>
<dbReference type="GO" id="GO:0016339">
    <property type="term" value="P:calcium-dependent cell-cell adhesion via plasma membrane cell adhesion molecules"/>
    <property type="evidence" value="ECO:0000318"/>
    <property type="project" value="GO_Central"/>
</dbReference>
<dbReference type="GO" id="GO:0016477">
    <property type="term" value="P:cell migration"/>
    <property type="evidence" value="ECO:0000318"/>
    <property type="project" value="GO_Central"/>
</dbReference>
<dbReference type="GO" id="GO:0000902">
    <property type="term" value="P:cell morphogenesis"/>
    <property type="evidence" value="ECO:0000318"/>
    <property type="project" value="GO_Central"/>
</dbReference>
<dbReference type="GO" id="GO:0044331">
    <property type="term" value="P:cell-cell adhesion mediated by cadherin"/>
    <property type="evidence" value="ECO:0000318"/>
    <property type="project" value="GO_Central"/>
</dbReference>
<dbReference type="GO" id="GO:0007043">
    <property type="term" value="P:cell-cell junction assembly"/>
    <property type="evidence" value="ECO:0000318"/>
    <property type="project" value="GO_Central"/>
</dbReference>
<dbReference type="GO" id="GO:0007156">
    <property type="term" value="P:homophilic cell adhesion via plasma membrane adhesion molecules"/>
    <property type="evidence" value="ECO:0007669"/>
    <property type="project" value="InterPro"/>
</dbReference>
<dbReference type="GO" id="GO:0007601">
    <property type="term" value="P:visual perception"/>
    <property type="evidence" value="ECO:0007669"/>
    <property type="project" value="UniProtKB-KW"/>
</dbReference>
<dbReference type="CDD" id="cd11304">
    <property type="entry name" value="Cadherin_repeat"/>
    <property type="match status" value="6"/>
</dbReference>
<dbReference type="FunFam" id="2.60.40.60:FF:000111">
    <property type="entry name" value="Cadherin-related family member 1"/>
    <property type="match status" value="1"/>
</dbReference>
<dbReference type="FunFam" id="2.60.40.60:FF:000113">
    <property type="entry name" value="Cadherin-related family member 1"/>
    <property type="match status" value="1"/>
</dbReference>
<dbReference type="FunFam" id="2.60.40.60:FF:000122">
    <property type="entry name" value="Cadherin-related family member 1"/>
    <property type="match status" value="1"/>
</dbReference>
<dbReference type="FunFam" id="2.60.40.60:FF:000124">
    <property type="entry name" value="Cadherin-related family member 1"/>
    <property type="match status" value="1"/>
</dbReference>
<dbReference type="FunFam" id="2.60.40.60:FF:000126">
    <property type="entry name" value="Cadherin-related family member 1"/>
    <property type="match status" value="1"/>
</dbReference>
<dbReference type="FunFam" id="2.60.40.60:FF:000177">
    <property type="entry name" value="Cadherin-related family member 1"/>
    <property type="match status" value="1"/>
</dbReference>
<dbReference type="Gene3D" id="2.60.40.60">
    <property type="entry name" value="Cadherins"/>
    <property type="match status" value="6"/>
</dbReference>
<dbReference type="InterPro" id="IPR039808">
    <property type="entry name" value="Cadherin"/>
</dbReference>
<dbReference type="InterPro" id="IPR002126">
    <property type="entry name" value="Cadherin-like_dom"/>
</dbReference>
<dbReference type="InterPro" id="IPR015919">
    <property type="entry name" value="Cadherin-like_sf"/>
</dbReference>
<dbReference type="InterPro" id="IPR020894">
    <property type="entry name" value="Cadherin_CS"/>
</dbReference>
<dbReference type="PANTHER" id="PTHR24027:SF422">
    <property type="entry name" value="CADHERIN DOMAIN-CONTAINING PROTEIN"/>
    <property type="match status" value="1"/>
</dbReference>
<dbReference type="PANTHER" id="PTHR24027">
    <property type="entry name" value="CADHERIN-23"/>
    <property type="match status" value="1"/>
</dbReference>
<dbReference type="Pfam" id="PF00028">
    <property type="entry name" value="Cadherin"/>
    <property type="match status" value="5"/>
</dbReference>
<dbReference type="PRINTS" id="PR00205">
    <property type="entry name" value="CADHERIN"/>
</dbReference>
<dbReference type="SMART" id="SM00112">
    <property type="entry name" value="CA"/>
    <property type="match status" value="6"/>
</dbReference>
<dbReference type="SUPFAM" id="SSF49313">
    <property type="entry name" value="Cadherin-like"/>
    <property type="match status" value="6"/>
</dbReference>
<dbReference type="PROSITE" id="PS00232">
    <property type="entry name" value="CADHERIN_1"/>
    <property type="match status" value="2"/>
</dbReference>
<dbReference type="PROSITE" id="PS50268">
    <property type="entry name" value="CADHERIN_2"/>
    <property type="match status" value="6"/>
</dbReference>
<evidence type="ECO:0000250" key="1"/>
<evidence type="ECO:0000255" key="2"/>
<evidence type="ECO:0000255" key="3">
    <source>
        <dbReference type="PROSITE-ProRule" id="PRU00043"/>
    </source>
</evidence>
<evidence type="ECO:0000256" key="4">
    <source>
        <dbReference type="SAM" id="MobiDB-lite"/>
    </source>
</evidence>
<evidence type="ECO:0000269" key="5">
    <source>
    </source>
</evidence>
<proteinExistence type="evidence at transcript level"/>
<sequence length="867" mass="94290">MGRGPPAVLAPWMLFLSLAQANFAPHFFDNGAGSTNGNMALFSLPEDTPVGSHVYTLNGTDPEGDPVSYHISFNPSARSVFSVDPNLGNITLIEELDREREDEIEAIISISDGLNLVAEKVTILVTDANDEAPRFIQEPYVVQVPEDTPSGSSIARVRAVDRDTGSAGSVTYFLKNPHPTEFSVDRHSGVLRLRAGAILDFEKARAHFVTVVAKDGGGKLRGADVVLSATTVVTVNVEDVQDMGPVFVGTPYYGYVYEDTLPGSEVLMVVAMDGDRGKPNRVLYSLVNGSDGAFEINETSGAISVMQSPSQLRREVYELHVQVTEVSSAGTPAAQAMVPVTIRIVDLNNHPPTFYGESGPQNRFELSMYEHPPQGEILRGLKITVNDSDQGANAKFNLRLVGPGGIFRVVPQTVLNEAQVTIIVENSAAIDFEKSKVLTFKLLAIEVNTPEKFSSTADVVIQLLDTNDNVPKFTSHYYVARIPENAPGGSNVLAVTAVDPDSGPWGEVKYSIYGSGADLFLIHPSSGIIYTQPWASLDAEATARYNFYVKAEDMEGRYSLAEVFITLLDVNDHYPQFGKSVQEKTMVLGTPVKIEATDQDAEEPNNLVDYSITHAEPANVFDINAHTGEIWLKNSIRSLDALHNITPSGDRTWSLEVQAKDRGSPSFSTTALLKIDIVDTEMLSRSPMAAFLMQTKDNPMKAVGVLAGIMAIIVAITVLISTATFWRNKKSNKVQPVRRVLRKRPSPAPRSVRIEWLKFRRTKAADKFVLREAPPNENCNNNSRGSTPAPQAPAPPPPPSPAPSVGQAPWTVPTVSGSLAPQQPQQPSPKPRAVAKRKAVGSPVQSALVSELRQKFEKKNLHSKAYF</sequence>
<keyword id="KW-0106">Calcium</keyword>
<keyword id="KW-0130">Cell adhesion</keyword>
<keyword id="KW-1003">Cell membrane</keyword>
<keyword id="KW-0325">Glycoprotein</keyword>
<keyword id="KW-0472">Membrane</keyword>
<keyword id="KW-0675">Receptor</keyword>
<keyword id="KW-1185">Reference proteome</keyword>
<keyword id="KW-0677">Repeat</keyword>
<keyword id="KW-0716">Sensory transduction</keyword>
<keyword id="KW-0732">Signal</keyword>
<keyword id="KW-0812">Transmembrane</keyword>
<keyword id="KW-1133">Transmembrane helix</keyword>
<keyword id="KW-0844">Vision</keyword>
<reference key="1">
    <citation type="journal article" date="2001" name="Neuron">
        <title>A photoreceptor-specific cadherin is essential for the structural integrity of the outer segment and for photoreceptor survival.</title>
        <authorList>
            <person name="Rattner A."/>
            <person name="Smallwood P.M."/>
            <person name="Williams J."/>
            <person name="Cooke C."/>
            <person name="Savchenko A."/>
            <person name="Lyubarsky A."/>
            <person name="Pugh E.N."/>
            <person name="Nathans J."/>
        </authorList>
    </citation>
    <scope>NUCLEOTIDE SEQUENCE [MRNA]</scope>
    <scope>TISSUE SPECIFICITY</scope>
    <source>
        <tissue>Retina</tissue>
    </source>
</reference>
<comment type="function">
    <text evidence="1">Potential calcium-dependent cell-adhesion protein. May be required for the structural integrity of the outer segment (OS) of photoreceptor cells (By similarity).</text>
</comment>
<comment type="subunit">
    <text evidence="1">Interacts with PROM1.</text>
</comment>
<comment type="subcellular location">
    <subcellularLocation>
        <location evidence="1">Cell membrane</location>
        <topology evidence="1">Single-pass membrane protein</topology>
    </subcellularLocation>
    <text evidence="1">Localized at the junction between the inner and outer segments of rod and cone photoreceptors cells. Confined to the base of the OS. Localized on the edges of nascent evaginating disks on the side of the OS opposite the connecting cilium. Expressed at postnatal day 2 at the apical tip of the rod photoreceptor cells, the site of the developing OS. Colocalized with rhodopsin between postnatal days 2 and 9 at the base of the growing OS region (By similarity).</text>
</comment>
<comment type="tissue specificity">
    <text evidence="5">Expressed in photoreceptor cells of the outer nuclear layer of the retina.</text>
</comment>
<comment type="PTM">
    <text evidence="1">Undergoes proteolytic cleavage; produces a soluble 95 kDa N-terminal fragment and a 25 kDa cell-associated C-terminal fragment.</text>
</comment>
<accession>Q8WN91</accession>
<protein>
    <recommendedName>
        <fullName>Cadherin-related family member 1</fullName>
    </recommendedName>
    <alternativeName>
        <fullName>Photoreceptor cadherin</fullName>
        <shortName>prCAD</shortName>
    </alternativeName>
    <alternativeName>
        <fullName>Protocadherin-21</fullName>
    </alternativeName>
</protein>
<feature type="signal peptide" evidence="2">
    <location>
        <begin position="1"/>
        <end position="21"/>
    </location>
</feature>
<feature type="chain" id="PRO_0000318497" description="Cadherin-related family member 1">
    <location>
        <begin position="22"/>
        <end position="867"/>
    </location>
</feature>
<feature type="topological domain" description="Extracellular" evidence="2">
    <location>
        <begin position="22"/>
        <end position="701"/>
    </location>
</feature>
<feature type="transmembrane region" description="Helical" evidence="2">
    <location>
        <begin position="702"/>
        <end position="722"/>
    </location>
</feature>
<feature type="topological domain" description="Cytoplasmic" evidence="2">
    <location>
        <begin position="723"/>
        <end position="867"/>
    </location>
</feature>
<feature type="domain" description="Cadherin 1" evidence="3">
    <location>
        <begin position="36"/>
        <end position="135"/>
    </location>
</feature>
<feature type="domain" description="Cadherin 2" evidence="3">
    <location>
        <begin position="136"/>
        <end position="247"/>
    </location>
</feature>
<feature type="domain" description="Cadherin 3" evidence="3">
    <location>
        <begin position="248"/>
        <end position="354"/>
    </location>
</feature>
<feature type="domain" description="Cadherin 4" evidence="3">
    <location>
        <begin position="360"/>
        <end position="473"/>
    </location>
</feature>
<feature type="domain" description="Cadherin 5" evidence="3">
    <location>
        <begin position="474"/>
        <end position="577"/>
    </location>
</feature>
<feature type="domain" description="Cadherin 6" evidence="3">
    <location>
        <begin position="574"/>
        <end position="689"/>
    </location>
</feature>
<feature type="region of interest" description="Disordered" evidence="4">
    <location>
        <begin position="767"/>
        <end position="843"/>
    </location>
</feature>
<feature type="compositionally biased region" description="Polar residues" evidence="4">
    <location>
        <begin position="777"/>
        <end position="786"/>
    </location>
</feature>
<feature type="compositionally biased region" description="Pro residues" evidence="4">
    <location>
        <begin position="790"/>
        <end position="802"/>
    </location>
</feature>
<feature type="glycosylation site" description="N-linked (GlcNAc...) asparagine" evidence="2">
    <location>
        <position position="58"/>
    </location>
</feature>
<feature type="glycosylation site" description="N-linked (GlcNAc...) asparagine" evidence="2">
    <location>
        <position position="89"/>
    </location>
</feature>
<feature type="glycosylation site" description="N-linked (GlcNAc...) asparagine" evidence="2">
    <location>
        <position position="288"/>
    </location>
</feature>
<feature type="glycosylation site" description="N-linked (GlcNAc...) asparagine" evidence="2">
    <location>
        <position position="297"/>
    </location>
</feature>
<name>CDHR1_BOVIN</name>
<organism>
    <name type="scientific">Bos taurus</name>
    <name type="common">Bovine</name>
    <dbReference type="NCBI Taxonomy" id="9913"/>
    <lineage>
        <taxon>Eukaryota</taxon>
        <taxon>Metazoa</taxon>
        <taxon>Chordata</taxon>
        <taxon>Craniata</taxon>
        <taxon>Vertebrata</taxon>
        <taxon>Euteleostomi</taxon>
        <taxon>Mammalia</taxon>
        <taxon>Eutheria</taxon>
        <taxon>Laurasiatheria</taxon>
        <taxon>Artiodactyla</taxon>
        <taxon>Ruminantia</taxon>
        <taxon>Pecora</taxon>
        <taxon>Bovidae</taxon>
        <taxon>Bovinae</taxon>
        <taxon>Bos</taxon>
    </lineage>
</organism>
<gene>
    <name type="primary">CDHR1</name>
    <name type="synonym">PCDH21</name>
    <name type="synonym">PRCAD</name>
</gene>